<accession>B4T0S7</accession>
<keyword id="KW-0963">Cytoplasm</keyword>
<keyword id="KW-0312">Gluconeogenesis</keyword>
<keyword id="KW-0324">Glycolysis</keyword>
<keyword id="KW-0413">Isomerase</keyword>
<name>TPIS_SALNS</name>
<gene>
    <name evidence="1" type="primary">tpiA</name>
    <name type="ordered locus">SNSL254_A4410</name>
</gene>
<organism>
    <name type="scientific">Salmonella newport (strain SL254)</name>
    <dbReference type="NCBI Taxonomy" id="423368"/>
    <lineage>
        <taxon>Bacteria</taxon>
        <taxon>Pseudomonadati</taxon>
        <taxon>Pseudomonadota</taxon>
        <taxon>Gammaproteobacteria</taxon>
        <taxon>Enterobacterales</taxon>
        <taxon>Enterobacteriaceae</taxon>
        <taxon>Salmonella</taxon>
    </lineage>
</organism>
<proteinExistence type="inferred from homology"/>
<feature type="chain" id="PRO_1000096530" description="Triosephosphate isomerase">
    <location>
        <begin position="1"/>
        <end position="255"/>
    </location>
</feature>
<feature type="active site" description="Electrophile" evidence="1">
    <location>
        <position position="95"/>
    </location>
</feature>
<feature type="active site" description="Proton acceptor" evidence="1">
    <location>
        <position position="167"/>
    </location>
</feature>
<feature type="binding site" evidence="1">
    <location>
        <begin position="9"/>
        <end position="11"/>
    </location>
    <ligand>
        <name>substrate</name>
    </ligand>
</feature>
<feature type="binding site" evidence="1">
    <location>
        <position position="173"/>
    </location>
    <ligand>
        <name>substrate</name>
    </ligand>
</feature>
<feature type="binding site" evidence="1">
    <location>
        <position position="212"/>
    </location>
    <ligand>
        <name>substrate</name>
    </ligand>
</feature>
<feature type="binding site" evidence="1">
    <location>
        <begin position="233"/>
        <end position="234"/>
    </location>
    <ligand>
        <name>substrate</name>
    </ligand>
</feature>
<comment type="function">
    <text evidence="1">Involved in the gluconeogenesis. Catalyzes stereospecifically the conversion of dihydroxyacetone phosphate (DHAP) to D-glyceraldehyde-3-phosphate (G3P).</text>
</comment>
<comment type="catalytic activity">
    <reaction evidence="1">
        <text>D-glyceraldehyde 3-phosphate = dihydroxyacetone phosphate</text>
        <dbReference type="Rhea" id="RHEA:18585"/>
        <dbReference type="ChEBI" id="CHEBI:57642"/>
        <dbReference type="ChEBI" id="CHEBI:59776"/>
        <dbReference type="EC" id="5.3.1.1"/>
    </reaction>
</comment>
<comment type="pathway">
    <text evidence="1">Carbohydrate biosynthesis; gluconeogenesis.</text>
</comment>
<comment type="pathway">
    <text evidence="1">Carbohydrate degradation; glycolysis; D-glyceraldehyde 3-phosphate from glycerone phosphate: step 1/1.</text>
</comment>
<comment type="subunit">
    <text evidence="1">Homodimer.</text>
</comment>
<comment type="subcellular location">
    <subcellularLocation>
        <location evidence="1">Cytoplasm</location>
    </subcellularLocation>
</comment>
<comment type="similarity">
    <text evidence="1">Belongs to the triosephosphate isomerase family.</text>
</comment>
<dbReference type="EC" id="5.3.1.1" evidence="1"/>
<dbReference type="EMBL" id="CP001113">
    <property type="protein sequence ID" value="ACF63696.1"/>
    <property type="molecule type" value="Genomic_DNA"/>
</dbReference>
<dbReference type="RefSeq" id="WP_001216339.1">
    <property type="nucleotide sequence ID" value="NZ_CCMR01000001.1"/>
</dbReference>
<dbReference type="SMR" id="B4T0S7"/>
<dbReference type="KEGG" id="see:SNSL254_A4410"/>
<dbReference type="HOGENOM" id="CLU_024251_2_1_6"/>
<dbReference type="UniPathway" id="UPA00109">
    <property type="reaction ID" value="UER00189"/>
</dbReference>
<dbReference type="UniPathway" id="UPA00138"/>
<dbReference type="Proteomes" id="UP000008824">
    <property type="component" value="Chromosome"/>
</dbReference>
<dbReference type="GO" id="GO:0005829">
    <property type="term" value="C:cytosol"/>
    <property type="evidence" value="ECO:0007669"/>
    <property type="project" value="TreeGrafter"/>
</dbReference>
<dbReference type="GO" id="GO:0004807">
    <property type="term" value="F:triose-phosphate isomerase activity"/>
    <property type="evidence" value="ECO:0007669"/>
    <property type="project" value="UniProtKB-UniRule"/>
</dbReference>
<dbReference type="GO" id="GO:0006094">
    <property type="term" value="P:gluconeogenesis"/>
    <property type="evidence" value="ECO:0007669"/>
    <property type="project" value="UniProtKB-UniRule"/>
</dbReference>
<dbReference type="GO" id="GO:0046166">
    <property type="term" value="P:glyceraldehyde-3-phosphate biosynthetic process"/>
    <property type="evidence" value="ECO:0007669"/>
    <property type="project" value="TreeGrafter"/>
</dbReference>
<dbReference type="GO" id="GO:0019563">
    <property type="term" value="P:glycerol catabolic process"/>
    <property type="evidence" value="ECO:0007669"/>
    <property type="project" value="TreeGrafter"/>
</dbReference>
<dbReference type="GO" id="GO:0006096">
    <property type="term" value="P:glycolytic process"/>
    <property type="evidence" value="ECO:0007669"/>
    <property type="project" value="UniProtKB-UniRule"/>
</dbReference>
<dbReference type="CDD" id="cd00311">
    <property type="entry name" value="TIM"/>
    <property type="match status" value="1"/>
</dbReference>
<dbReference type="FunFam" id="3.20.20.70:FF:000020">
    <property type="entry name" value="Triosephosphate isomerase"/>
    <property type="match status" value="1"/>
</dbReference>
<dbReference type="Gene3D" id="3.20.20.70">
    <property type="entry name" value="Aldolase class I"/>
    <property type="match status" value="1"/>
</dbReference>
<dbReference type="HAMAP" id="MF_00147_B">
    <property type="entry name" value="TIM_B"/>
    <property type="match status" value="1"/>
</dbReference>
<dbReference type="InterPro" id="IPR013785">
    <property type="entry name" value="Aldolase_TIM"/>
</dbReference>
<dbReference type="InterPro" id="IPR035990">
    <property type="entry name" value="TIM_sf"/>
</dbReference>
<dbReference type="InterPro" id="IPR022896">
    <property type="entry name" value="TrioseP_Isoase_bac/euk"/>
</dbReference>
<dbReference type="InterPro" id="IPR000652">
    <property type="entry name" value="Triosephosphate_isomerase"/>
</dbReference>
<dbReference type="InterPro" id="IPR020861">
    <property type="entry name" value="Triosephosphate_isomerase_AS"/>
</dbReference>
<dbReference type="NCBIfam" id="TIGR00419">
    <property type="entry name" value="tim"/>
    <property type="match status" value="1"/>
</dbReference>
<dbReference type="PANTHER" id="PTHR21139">
    <property type="entry name" value="TRIOSEPHOSPHATE ISOMERASE"/>
    <property type="match status" value="1"/>
</dbReference>
<dbReference type="PANTHER" id="PTHR21139:SF42">
    <property type="entry name" value="TRIOSEPHOSPHATE ISOMERASE"/>
    <property type="match status" value="1"/>
</dbReference>
<dbReference type="Pfam" id="PF00121">
    <property type="entry name" value="TIM"/>
    <property type="match status" value="1"/>
</dbReference>
<dbReference type="SUPFAM" id="SSF51351">
    <property type="entry name" value="Triosephosphate isomerase (TIM)"/>
    <property type="match status" value="1"/>
</dbReference>
<dbReference type="PROSITE" id="PS00171">
    <property type="entry name" value="TIM_1"/>
    <property type="match status" value="1"/>
</dbReference>
<dbReference type="PROSITE" id="PS51440">
    <property type="entry name" value="TIM_2"/>
    <property type="match status" value="1"/>
</dbReference>
<reference key="1">
    <citation type="journal article" date="2011" name="J. Bacteriol.">
        <title>Comparative genomics of 28 Salmonella enterica isolates: evidence for CRISPR-mediated adaptive sublineage evolution.</title>
        <authorList>
            <person name="Fricke W.F."/>
            <person name="Mammel M.K."/>
            <person name="McDermott P.F."/>
            <person name="Tartera C."/>
            <person name="White D.G."/>
            <person name="Leclerc J.E."/>
            <person name="Ravel J."/>
            <person name="Cebula T.A."/>
        </authorList>
    </citation>
    <scope>NUCLEOTIDE SEQUENCE [LARGE SCALE GENOMIC DNA]</scope>
    <source>
        <strain>SL254</strain>
    </source>
</reference>
<evidence type="ECO:0000255" key="1">
    <source>
        <dbReference type="HAMAP-Rule" id="MF_00147"/>
    </source>
</evidence>
<protein>
    <recommendedName>
        <fullName evidence="1">Triosephosphate isomerase</fullName>
        <shortName evidence="1">TIM</shortName>
        <shortName evidence="1">TPI</shortName>
        <ecNumber evidence="1">5.3.1.1</ecNumber>
    </recommendedName>
    <alternativeName>
        <fullName evidence="1">Triose-phosphate isomerase</fullName>
    </alternativeName>
</protein>
<sequence>MRHPLVMGNWKLNGSRHMVNELVANLRKELTGVAGCDVAIAPPEMYIDLAKRAAAGSHIMLGAQNVDLNLSGAFTGETSAEMLKDIGAQYIIIGHSERRTYHKESDELIAKKFAVLKEQGLTPVLCIGETEAENEAGKTEEVCARQIDAVLKTQGAAAFEGAVIAYEPVWAIGTGKSATPAQAQAVHKFIRDHIAKADAKIAEQVIIQYGGSVNASNAAELFAQPDIDGALVGGASLKADAFAVIVKAAEAAKQA</sequence>